<sequence>MHEGNRSPRPMRMEAKTVKPRHPLVSRLAELLVSTWGEYLQLEPYHLPADLGFVEGQLEGDRLTIVNRCYQSRVFRKLHLELATIGPNLDILHCVMYPRPQFDLPIYGTDIVASTQMVSAAIVDLSPVRGELPPAYLAGLEPSFARCTDFGQLRNLPPWGTIFSPRCVFARVVTPTEADLFMEISRAYLRFHCEQAARAEAVDTATEAQILAGQRHYCEQQQQNDKTRRILAQAFDEAWAERYIRTVLFDLPQ</sequence>
<keyword id="KW-0560">Oxidoreductase</keyword>
<keyword id="KW-1185">Reference proteome</keyword>
<name>PCYA_GLOVI</name>
<organism>
    <name type="scientific">Gloeobacter violaceus (strain ATCC 29082 / PCC 7421)</name>
    <dbReference type="NCBI Taxonomy" id="251221"/>
    <lineage>
        <taxon>Bacteria</taxon>
        <taxon>Bacillati</taxon>
        <taxon>Cyanobacteriota</taxon>
        <taxon>Cyanophyceae</taxon>
        <taxon>Gloeobacterales</taxon>
        <taxon>Gloeobacteraceae</taxon>
        <taxon>Gloeobacter</taxon>
    </lineage>
</organism>
<protein>
    <recommendedName>
        <fullName>Phycocyanobilin:ferredoxin oxidoreductase</fullName>
        <ecNumber>1.3.7.5</ecNumber>
    </recommendedName>
</protein>
<dbReference type="EC" id="1.3.7.5"/>
<dbReference type="EMBL" id="BA000045">
    <property type="protein sequence ID" value="BAC90530.1"/>
    <property type="molecule type" value="Genomic_DNA"/>
</dbReference>
<dbReference type="RefSeq" id="NP_925535.1">
    <property type="nucleotide sequence ID" value="NC_005125.1"/>
</dbReference>
<dbReference type="RefSeq" id="WP_011142583.1">
    <property type="nucleotide sequence ID" value="NC_005125.1"/>
</dbReference>
<dbReference type="SMR" id="Q7NHE8"/>
<dbReference type="STRING" id="251221.gene:10760089"/>
<dbReference type="EnsemblBacteria" id="BAC90530">
    <property type="protein sequence ID" value="BAC90530"/>
    <property type="gene ID" value="BAC90530"/>
</dbReference>
<dbReference type="KEGG" id="gvi:glr2589"/>
<dbReference type="PATRIC" id="fig|251221.4.peg.2628"/>
<dbReference type="eggNOG" id="ENOG502Z7RN">
    <property type="taxonomic scope" value="Bacteria"/>
</dbReference>
<dbReference type="HOGENOM" id="CLU_074224_0_0_3"/>
<dbReference type="InParanoid" id="Q7NHE8"/>
<dbReference type="OrthoDB" id="581340at2"/>
<dbReference type="PhylomeDB" id="Q7NHE8"/>
<dbReference type="Proteomes" id="UP000000557">
    <property type="component" value="Chromosome"/>
</dbReference>
<dbReference type="GO" id="GO:0050897">
    <property type="term" value="F:cobalt ion binding"/>
    <property type="evidence" value="ECO:0007669"/>
    <property type="project" value="InterPro"/>
</dbReference>
<dbReference type="GO" id="GO:0050620">
    <property type="term" value="F:phycocyanobilin:ferredoxin oxidoreductase activity"/>
    <property type="evidence" value="ECO:0007669"/>
    <property type="project" value="UniProtKB-UniRule"/>
</dbReference>
<dbReference type="GO" id="GO:0010024">
    <property type="term" value="P:phytochromobilin biosynthetic process"/>
    <property type="evidence" value="ECO:0007669"/>
    <property type="project" value="InterPro"/>
</dbReference>
<dbReference type="Gene3D" id="3.40.1500.20">
    <property type="match status" value="1"/>
</dbReference>
<dbReference type="HAMAP" id="MF_00618">
    <property type="entry name" value="Ferredoxin_bilin_red"/>
    <property type="match status" value="1"/>
</dbReference>
<dbReference type="InterPro" id="IPR009249">
    <property type="entry name" value="Ferredoxin-dep_bilin_Rdtase"/>
</dbReference>
<dbReference type="InterPro" id="IPR022870">
    <property type="entry name" value="Ferredoxin_bilin_OxRdtase"/>
</dbReference>
<dbReference type="NCBIfam" id="NF002760">
    <property type="entry name" value="PRK02816.1"/>
    <property type="match status" value="1"/>
</dbReference>
<dbReference type="PANTHER" id="PTHR34557">
    <property type="entry name" value="PHYTOCHROMOBILIN:FERREDOXIN OXIDOREDUCTASE, CHLOROPLASTIC"/>
    <property type="match status" value="1"/>
</dbReference>
<dbReference type="PANTHER" id="PTHR34557:SF1">
    <property type="entry name" value="PHYTOCHROMOBILIN:FERREDOXIN OXIDOREDUCTASE, CHLOROPLASTIC"/>
    <property type="match status" value="1"/>
</dbReference>
<dbReference type="Pfam" id="PF05996">
    <property type="entry name" value="Fe_bilin_red"/>
    <property type="match status" value="1"/>
</dbReference>
<evidence type="ECO:0000250" key="1"/>
<evidence type="ECO:0000305" key="2"/>
<proteinExistence type="inferred from homology"/>
<feature type="chain" id="PRO_0000216739" description="Phycocyanobilin:ferredoxin oxidoreductase">
    <location>
        <begin position="1"/>
        <end position="253"/>
    </location>
</feature>
<comment type="function">
    <text evidence="1">Catalyzes the four-electron reduction of biliverdin IX-alpha (2-electron reduction at both the A and D rings); the reaction proceeds via an isolatable 2-electron intermediate, 181,182-dihydrobiliverdin.</text>
</comment>
<comment type="catalytic activity">
    <reaction>
        <text>(2R,3Z)-phycocyanobilin + 4 oxidized [2Fe-2S]-[ferredoxin] = biliverdin IXalpha + 4 reduced [2Fe-2S]-[ferredoxin] + 4 H(+)</text>
        <dbReference type="Rhea" id="RHEA:15309"/>
        <dbReference type="Rhea" id="RHEA-COMP:10000"/>
        <dbReference type="Rhea" id="RHEA-COMP:10001"/>
        <dbReference type="ChEBI" id="CHEBI:15378"/>
        <dbReference type="ChEBI" id="CHEBI:33737"/>
        <dbReference type="ChEBI" id="CHEBI:33738"/>
        <dbReference type="ChEBI" id="CHEBI:57437"/>
        <dbReference type="ChEBI" id="CHEBI:57991"/>
        <dbReference type="EC" id="1.3.7.5"/>
    </reaction>
</comment>
<comment type="similarity">
    <text evidence="2">Belongs to the HY2 family.</text>
</comment>
<reference key="1">
    <citation type="journal article" date="2003" name="DNA Res.">
        <title>Complete genome structure of Gloeobacter violaceus PCC 7421, a cyanobacterium that lacks thylakoids.</title>
        <authorList>
            <person name="Nakamura Y."/>
            <person name="Kaneko T."/>
            <person name="Sato S."/>
            <person name="Mimuro M."/>
            <person name="Miyashita H."/>
            <person name="Tsuchiya T."/>
            <person name="Sasamoto S."/>
            <person name="Watanabe A."/>
            <person name="Kawashima K."/>
            <person name="Kishida Y."/>
            <person name="Kiyokawa C."/>
            <person name="Kohara M."/>
            <person name="Matsumoto M."/>
            <person name="Matsuno A."/>
            <person name="Nakazaki N."/>
            <person name="Shimpo S."/>
            <person name="Takeuchi C."/>
            <person name="Yamada M."/>
            <person name="Tabata S."/>
        </authorList>
    </citation>
    <scope>NUCLEOTIDE SEQUENCE [LARGE SCALE GENOMIC DNA]</scope>
    <source>
        <strain>ATCC 29082 / PCC 7421</strain>
    </source>
</reference>
<accession>Q7NHE8</accession>
<gene>
    <name type="primary">pcyA</name>
    <name type="ordered locus">glr2589</name>
</gene>